<protein>
    <recommendedName>
        <fullName evidence="1">Cysteine desulfuration protein SufE</fullName>
    </recommendedName>
</protein>
<name>SUFE_SALTI</name>
<comment type="function">
    <text evidence="1">Participates in cysteine desulfuration mediated by SufS. Cysteine desulfuration mobilizes sulfur from L-cysteine to yield L-alanine and constitutes an essential step in sulfur metabolism for biosynthesis of a variety of sulfur-containing biomolecules. Functions as a sulfur acceptor for SufS, by mediating the direct transfer of the sulfur atom from the S-sulfanylcysteine of SufS, an intermediate product of cysteine desulfuration process.</text>
</comment>
<comment type="pathway">
    <text evidence="1">Cofactor biosynthesis; iron-sulfur cluster biosynthesis.</text>
</comment>
<comment type="subunit">
    <text evidence="1">Homodimer. Interacts with SufS.</text>
</comment>
<comment type="subcellular location">
    <subcellularLocation>
        <location evidence="1">Cytoplasm</location>
    </subcellularLocation>
</comment>
<comment type="similarity">
    <text evidence="1">Belongs to the SufE family.</text>
</comment>
<organism>
    <name type="scientific">Salmonella typhi</name>
    <dbReference type="NCBI Taxonomy" id="90370"/>
    <lineage>
        <taxon>Bacteria</taxon>
        <taxon>Pseudomonadati</taxon>
        <taxon>Pseudomonadota</taxon>
        <taxon>Gammaproteobacteria</taxon>
        <taxon>Enterobacterales</taxon>
        <taxon>Enterobacteriaceae</taxon>
        <taxon>Salmonella</taxon>
    </lineage>
</organism>
<accession>Q8Z6K0</accession>
<accession>Q7CA66</accession>
<evidence type="ECO:0000255" key="1">
    <source>
        <dbReference type="HAMAP-Rule" id="MF_01832"/>
    </source>
</evidence>
<sequence>MAALPDKEKLLRNFTRCANWEEKYLYIIELGQRLAELNPQDRNPQNTIHGCQSQVWIVMRRNANGIIELQGDSDAAIVKGLMAVVFILYHQMTAQDIVHFDVRPWFEKMALTQHLTPSRSQGLEAMIRAIRAKAATLS</sequence>
<reference key="1">
    <citation type="journal article" date="2001" name="Nature">
        <title>Complete genome sequence of a multiple drug resistant Salmonella enterica serovar Typhi CT18.</title>
        <authorList>
            <person name="Parkhill J."/>
            <person name="Dougan G."/>
            <person name="James K.D."/>
            <person name="Thomson N.R."/>
            <person name="Pickard D."/>
            <person name="Wain J."/>
            <person name="Churcher C.M."/>
            <person name="Mungall K.L."/>
            <person name="Bentley S.D."/>
            <person name="Holden M.T.G."/>
            <person name="Sebaihia M."/>
            <person name="Baker S."/>
            <person name="Basham D."/>
            <person name="Brooks K."/>
            <person name="Chillingworth T."/>
            <person name="Connerton P."/>
            <person name="Cronin A."/>
            <person name="Davis P."/>
            <person name="Davies R.M."/>
            <person name="Dowd L."/>
            <person name="White N."/>
            <person name="Farrar J."/>
            <person name="Feltwell T."/>
            <person name="Hamlin N."/>
            <person name="Haque A."/>
            <person name="Hien T.T."/>
            <person name="Holroyd S."/>
            <person name="Jagels K."/>
            <person name="Krogh A."/>
            <person name="Larsen T.S."/>
            <person name="Leather S."/>
            <person name="Moule S."/>
            <person name="O'Gaora P."/>
            <person name="Parry C."/>
            <person name="Quail M.A."/>
            <person name="Rutherford K.M."/>
            <person name="Simmonds M."/>
            <person name="Skelton J."/>
            <person name="Stevens K."/>
            <person name="Whitehead S."/>
            <person name="Barrell B.G."/>
        </authorList>
    </citation>
    <scope>NUCLEOTIDE SEQUENCE [LARGE SCALE GENOMIC DNA]</scope>
    <source>
        <strain>CT18</strain>
    </source>
</reference>
<reference key="2">
    <citation type="journal article" date="2003" name="J. Bacteriol.">
        <title>Comparative genomics of Salmonella enterica serovar Typhi strains Ty2 and CT18.</title>
        <authorList>
            <person name="Deng W."/>
            <person name="Liou S.-R."/>
            <person name="Plunkett G. III"/>
            <person name="Mayhew G.F."/>
            <person name="Rose D.J."/>
            <person name="Burland V."/>
            <person name="Kodoyianni V."/>
            <person name="Schwartz D.C."/>
            <person name="Blattner F.R."/>
        </authorList>
    </citation>
    <scope>NUCLEOTIDE SEQUENCE [LARGE SCALE GENOMIC DNA]</scope>
    <source>
        <strain>ATCC 700931 / Ty2</strain>
    </source>
</reference>
<gene>
    <name evidence="1" type="primary">sufE</name>
    <name type="ordered locus">STY1749</name>
    <name type="ordered locus">t1242</name>
</gene>
<dbReference type="EMBL" id="AL513382">
    <property type="protein sequence ID" value="CAD01991.1"/>
    <property type="molecule type" value="Genomic_DNA"/>
</dbReference>
<dbReference type="EMBL" id="AE014613">
    <property type="protein sequence ID" value="AAO68897.1"/>
    <property type="molecule type" value="Genomic_DNA"/>
</dbReference>
<dbReference type="RefSeq" id="NP_456150.1">
    <property type="nucleotide sequence ID" value="NC_003198.1"/>
</dbReference>
<dbReference type="RefSeq" id="WP_000729470.1">
    <property type="nucleotide sequence ID" value="NZ_WSUR01000011.1"/>
</dbReference>
<dbReference type="SMR" id="Q8Z6K0"/>
<dbReference type="STRING" id="220341.gene:17585683"/>
<dbReference type="KEGG" id="stt:t1242"/>
<dbReference type="KEGG" id="sty:STY1749"/>
<dbReference type="PATRIC" id="fig|220341.7.peg.1760"/>
<dbReference type="eggNOG" id="COG2166">
    <property type="taxonomic scope" value="Bacteria"/>
</dbReference>
<dbReference type="HOGENOM" id="CLU_124502_1_1_6"/>
<dbReference type="OMA" id="NFSRCAN"/>
<dbReference type="OrthoDB" id="9799320at2"/>
<dbReference type="UniPathway" id="UPA00266"/>
<dbReference type="Proteomes" id="UP000000541">
    <property type="component" value="Chromosome"/>
</dbReference>
<dbReference type="Proteomes" id="UP000002670">
    <property type="component" value="Chromosome"/>
</dbReference>
<dbReference type="GO" id="GO:0005737">
    <property type="term" value="C:cytoplasm"/>
    <property type="evidence" value="ECO:0007669"/>
    <property type="project" value="UniProtKB-SubCell"/>
</dbReference>
<dbReference type="GO" id="GO:0016226">
    <property type="term" value="P:iron-sulfur cluster assembly"/>
    <property type="evidence" value="ECO:0007669"/>
    <property type="project" value="InterPro"/>
</dbReference>
<dbReference type="GO" id="GO:0006790">
    <property type="term" value="P:sulfur compound metabolic process"/>
    <property type="evidence" value="ECO:0007669"/>
    <property type="project" value="InterPro"/>
</dbReference>
<dbReference type="Gene3D" id="3.90.1010.10">
    <property type="match status" value="1"/>
</dbReference>
<dbReference type="HAMAP" id="MF_01832">
    <property type="entry name" value="SufE"/>
    <property type="match status" value="1"/>
</dbReference>
<dbReference type="InterPro" id="IPR023939">
    <property type="entry name" value="Cysteine_desulfuration_SufE"/>
</dbReference>
<dbReference type="InterPro" id="IPR003808">
    <property type="entry name" value="Fe-S_metab-assoc_dom"/>
</dbReference>
<dbReference type="NCBIfam" id="NF006792">
    <property type="entry name" value="PRK09296.1"/>
    <property type="match status" value="1"/>
</dbReference>
<dbReference type="PANTHER" id="PTHR43597:SF3">
    <property type="entry name" value="CYSTEINE DESULFURATION PROTEIN SUFE"/>
    <property type="match status" value="1"/>
</dbReference>
<dbReference type="PANTHER" id="PTHR43597">
    <property type="entry name" value="SULFUR ACCEPTOR PROTEIN CSDE"/>
    <property type="match status" value="1"/>
</dbReference>
<dbReference type="Pfam" id="PF02657">
    <property type="entry name" value="SufE"/>
    <property type="match status" value="1"/>
</dbReference>
<dbReference type="SUPFAM" id="SSF82649">
    <property type="entry name" value="SufE/NifU"/>
    <property type="match status" value="1"/>
</dbReference>
<feature type="chain" id="PRO_0000202130" description="Cysteine desulfuration protein SufE">
    <location>
        <begin position="1"/>
        <end position="138"/>
    </location>
</feature>
<feature type="active site" description="Cysteine persulfide intermediate" evidence="1">
    <location>
        <position position="51"/>
    </location>
</feature>
<proteinExistence type="inferred from homology"/>
<keyword id="KW-0963">Cytoplasm</keyword>